<sequence>MYLQVETRTSSRLHLKRAPGIRSWSLLVGILSIGLAAAYYSGDSLGWKLFYVTGCLFVAVQNLEDWEEAIFDKSTGKVVLKTFSLYKKLLTLFRAGHDQVVVLLHDVRDVSVEEEKVRYFGKGYMVVLRLATGFSHPLTQSAVMGHRSDVEAIAKLITSFLELHCLESPTELSQSSDSEAGDPASQS</sequence>
<organism>
    <name type="scientific">Homo sapiens</name>
    <name type="common">Human</name>
    <dbReference type="NCBI Taxonomy" id="9606"/>
    <lineage>
        <taxon>Eukaryota</taxon>
        <taxon>Metazoa</taxon>
        <taxon>Chordata</taxon>
        <taxon>Craniata</taxon>
        <taxon>Vertebrata</taxon>
        <taxon>Euteleostomi</taxon>
        <taxon>Mammalia</taxon>
        <taxon>Eutheria</taxon>
        <taxon>Euarchontoglires</taxon>
        <taxon>Primates</taxon>
        <taxon>Haplorrhini</taxon>
        <taxon>Catarrhini</taxon>
        <taxon>Hominidae</taxon>
        <taxon>Homo</taxon>
    </lineage>
</organism>
<protein>
    <recommendedName>
        <fullName evidence="8">Cytochrome b-245 chaperone 1</fullName>
    </recommendedName>
    <alternativeName>
        <fullName evidence="1">Essential for reactive oxygen species protein</fullName>
        <shortName evidence="1">Eros</shortName>
    </alternativeName>
</protein>
<reference key="1">
    <citation type="journal article" date="2004" name="Nat. Genet.">
        <title>Complete sequencing and characterization of 21,243 full-length human cDNAs.</title>
        <authorList>
            <person name="Ota T."/>
            <person name="Suzuki Y."/>
            <person name="Nishikawa T."/>
            <person name="Otsuki T."/>
            <person name="Sugiyama T."/>
            <person name="Irie R."/>
            <person name="Wakamatsu A."/>
            <person name="Hayashi K."/>
            <person name="Sato H."/>
            <person name="Nagai K."/>
            <person name="Kimura K."/>
            <person name="Makita H."/>
            <person name="Sekine M."/>
            <person name="Obayashi M."/>
            <person name="Nishi T."/>
            <person name="Shibahara T."/>
            <person name="Tanaka T."/>
            <person name="Ishii S."/>
            <person name="Yamamoto J."/>
            <person name="Saito K."/>
            <person name="Kawai Y."/>
            <person name="Isono Y."/>
            <person name="Nakamura Y."/>
            <person name="Nagahari K."/>
            <person name="Murakami K."/>
            <person name="Yasuda T."/>
            <person name="Iwayanagi T."/>
            <person name="Wagatsuma M."/>
            <person name="Shiratori A."/>
            <person name="Sudo H."/>
            <person name="Hosoiri T."/>
            <person name="Kaku Y."/>
            <person name="Kodaira H."/>
            <person name="Kondo H."/>
            <person name="Sugawara M."/>
            <person name="Takahashi M."/>
            <person name="Kanda K."/>
            <person name="Yokoi T."/>
            <person name="Furuya T."/>
            <person name="Kikkawa E."/>
            <person name="Omura Y."/>
            <person name="Abe K."/>
            <person name="Kamihara K."/>
            <person name="Katsuta N."/>
            <person name="Sato K."/>
            <person name="Tanikawa M."/>
            <person name="Yamazaki M."/>
            <person name="Ninomiya K."/>
            <person name="Ishibashi T."/>
            <person name="Yamashita H."/>
            <person name="Murakawa K."/>
            <person name="Fujimori K."/>
            <person name="Tanai H."/>
            <person name="Kimata M."/>
            <person name="Watanabe M."/>
            <person name="Hiraoka S."/>
            <person name="Chiba Y."/>
            <person name="Ishida S."/>
            <person name="Ono Y."/>
            <person name="Takiguchi S."/>
            <person name="Watanabe S."/>
            <person name="Yosida M."/>
            <person name="Hotuta T."/>
            <person name="Kusano J."/>
            <person name="Kanehori K."/>
            <person name="Takahashi-Fujii A."/>
            <person name="Hara H."/>
            <person name="Tanase T.-O."/>
            <person name="Nomura Y."/>
            <person name="Togiya S."/>
            <person name="Komai F."/>
            <person name="Hara R."/>
            <person name="Takeuchi K."/>
            <person name="Arita M."/>
            <person name="Imose N."/>
            <person name="Musashino K."/>
            <person name="Yuuki H."/>
            <person name="Oshima A."/>
            <person name="Sasaki N."/>
            <person name="Aotsuka S."/>
            <person name="Yoshikawa Y."/>
            <person name="Matsunawa H."/>
            <person name="Ichihara T."/>
            <person name="Shiohata N."/>
            <person name="Sano S."/>
            <person name="Moriya S."/>
            <person name="Momiyama H."/>
            <person name="Satoh N."/>
            <person name="Takami S."/>
            <person name="Terashima Y."/>
            <person name="Suzuki O."/>
            <person name="Nakagawa S."/>
            <person name="Senoh A."/>
            <person name="Mizoguchi H."/>
            <person name="Goto Y."/>
            <person name="Shimizu F."/>
            <person name="Wakebe H."/>
            <person name="Hishigaki H."/>
            <person name="Watanabe T."/>
            <person name="Sugiyama A."/>
            <person name="Takemoto M."/>
            <person name="Kawakami B."/>
            <person name="Yamazaki M."/>
            <person name="Watanabe K."/>
            <person name="Kumagai A."/>
            <person name="Itakura S."/>
            <person name="Fukuzumi Y."/>
            <person name="Fujimori Y."/>
            <person name="Komiyama M."/>
            <person name="Tashiro H."/>
            <person name="Tanigami A."/>
            <person name="Fujiwara T."/>
            <person name="Ono T."/>
            <person name="Yamada K."/>
            <person name="Fujii Y."/>
            <person name="Ozaki K."/>
            <person name="Hirao M."/>
            <person name="Ohmori Y."/>
            <person name="Kawabata A."/>
            <person name="Hikiji T."/>
            <person name="Kobatake N."/>
            <person name="Inagaki H."/>
            <person name="Ikema Y."/>
            <person name="Okamoto S."/>
            <person name="Okitani R."/>
            <person name="Kawakami T."/>
            <person name="Noguchi S."/>
            <person name="Itoh T."/>
            <person name="Shigeta K."/>
            <person name="Senba T."/>
            <person name="Matsumura K."/>
            <person name="Nakajima Y."/>
            <person name="Mizuno T."/>
            <person name="Morinaga M."/>
            <person name="Sasaki M."/>
            <person name="Togashi T."/>
            <person name="Oyama M."/>
            <person name="Hata H."/>
            <person name="Watanabe M."/>
            <person name="Komatsu T."/>
            <person name="Mizushima-Sugano J."/>
            <person name="Satoh T."/>
            <person name="Shirai Y."/>
            <person name="Takahashi Y."/>
            <person name="Nakagawa K."/>
            <person name="Okumura K."/>
            <person name="Nagase T."/>
            <person name="Nomura N."/>
            <person name="Kikuchi H."/>
            <person name="Masuho Y."/>
            <person name="Yamashita R."/>
            <person name="Nakai K."/>
            <person name="Yada T."/>
            <person name="Nakamura Y."/>
            <person name="Ohara O."/>
            <person name="Isogai T."/>
            <person name="Sugano S."/>
        </authorList>
    </citation>
    <scope>NUCLEOTIDE SEQUENCE [LARGE SCALE MRNA] (ISOFORM 2)</scope>
    <source>
        <tissue>Cerebellum</tissue>
    </source>
</reference>
<reference key="2">
    <citation type="journal article" date="2006" name="Nature">
        <title>DNA sequence of human chromosome 17 and analysis of rearrangement in the human lineage.</title>
        <authorList>
            <person name="Zody M.C."/>
            <person name="Garber M."/>
            <person name="Adams D.J."/>
            <person name="Sharpe T."/>
            <person name="Harrow J."/>
            <person name="Lupski J.R."/>
            <person name="Nicholson C."/>
            <person name="Searle S.M."/>
            <person name="Wilming L."/>
            <person name="Young S.K."/>
            <person name="Abouelleil A."/>
            <person name="Allen N.R."/>
            <person name="Bi W."/>
            <person name="Bloom T."/>
            <person name="Borowsky M.L."/>
            <person name="Bugalter B.E."/>
            <person name="Butler J."/>
            <person name="Chang J.L."/>
            <person name="Chen C.-K."/>
            <person name="Cook A."/>
            <person name="Corum B."/>
            <person name="Cuomo C.A."/>
            <person name="de Jong P.J."/>
            <person name="DeCaprio D."/>
            <person name="Dewar K."/>
            <person name="FitzGerald M."/>
            <person name="Gilbert J."/>
            <person name="Gibson R."/>
            <person name="Gnerre S."/>
            <person name="Goldstein S."/>
            <person name="Grafham D.V."/>
            <person name="Grocock R."/>
            <person name="Hafez N."/>
            <person name="Hagopian D.S."/>
            <person name="Hart E."/>
            <person name="Norman C.H."/>
            <person name="Humphray S."/>
            <person name="Jaffe D.B."/>
            <person name="Jones M."/>
            <person name="Kamal M."/>
            <person name="Khodiyar V.K."/>
            <person name="LaButti K."/>
            <person name="Laird G."/>
            <person name="Lehoczky J."/>
            <person name="Liu X."/>
            <person name="Lokyitsang T."/>
            <person name="Loveland J."/>
            <person name="Lui A."/>
            <person name="Macdonald P."/>
            <person name="Major J.E."/>
            <person name="Matthews L."/>
            <person name="Mauceli E."/>
            <person name="McCarroll S.A."/>
            <person name="Mihalev A.H."/>
            <person name="Mudge J."/>
            <person name="Nguyen C."/>
            <person name="Nicol R."/>
            <person name="O'Leary S.B."/>
            <person name="Osoegawa K."/>
            <person name="Schwartz D.C."/>
            <person name="Shaw-Smith C."/>
            <person name="Stankiewicz P."/>
            <person name="Steward C."/>
            <person name="Swarbreck D."/>
            <person name="Venkataraman V."/>
            <person name="Whittaker C.A."/>
            <person name="Yang X."/>
            <person name="Zimmer A.R."/>
            <person name="Bradley A."/>
            <person name="Hubbard T."/>
            <person name="Birren B.W."/>
            <person name="Rogers J."/>
            <person name="Lander E.S."/>
            <person name="Nusbaum C."/>
        </authorList>
    </citation>
    <scope>NUCLEOTIDE SEQUENCE [LARGE SCALE GENOMIC DNA]</scope>
</reference>
<reference key="3">
    <citation type="submission" date="2005-07" db="EMBL/GenBank/DDBJ databases">
        <authorList>
            <person name="Mural R.J."/>
            <person name="Istrail S."/>
            <person name="Sutton G."/>
            <person name="Florea L."/>
            <person name="Halpern A.L."/>
            <person name="Mobarry C.M."/>
            <person name="Lippert R."/>
            <person name="Walenz B."/>
            <person name="Shatkay H."/>
            <person name="Dew I."/>
            <person name="Miller J.R."/>
            <person name="Flanigan M.J."/>
            <person name="Edwards N.J."/>
            <person name="Bolanos R."/>
            <person name="Fasulo D."/>
            <person name="Halldorsson B.V."/>
            <person name="Hannenhalli S."/>
            <person name="Turner R."/>
            <person name="Yooseph S."/>
            <person name="Lu F."/>
            <person name="Nusskern D.R."/>
            <person name="Shue B.C."/>
            <person name="Zheng X.H."/>
            <person name="Zhong F."/>
            <person name="Delcher A.L."/>
            <person name="Huson D.H."/>
            <person name="Kravitz S.A."/>
            <person name="Mouchard L."/>
            <person name="Reinert K."/>
            <person name="Remington K.A."/>
            <person name="Clark A.G."/>
            <person name="Waterman M.S."/>
            <person name="Eichler E.E."/>
            <person name="Adams M.D."/>
            <person name="Hunkapiller M.W."/>
            <person name="Myers E.W."/>
            <person name="Venter J.C."/>
        </authorList>
    </citation>
    <scope>NUCLEOTIDE SEQUENCE [LARGE SCALE GENOMIC DNA]</scope>
</reference>
<reference key="4">
    <citation type="journal article" date="2004" name="Genome Res.">
        <title>The status, quality, and expansion of the NIH full-length cDNA project: the Mammalian Gene Collection (MGC).</title>
        <authorList>
            <consortium name="The MGC Project Team"/>
        </authorList>
    </citation>
    <scope>NUCLEOTIDE SEQUENCE [LARGE SCALE MRNA] (ISOFORM 1)</scope>
    <source>
        <tissue>Lung carcinoma</tissue>
    </source>
</reference>
<reference key="5">
    <citation type="journal article" date="2011" name="BMC Syst. Biol.">
        <title>Initial characterization of the human central proteome.</title>
        <authorList>
            <person name="Burkard T.R."/>
            <person name="Planyavsky M."/>
            <person name="Kaupe I."/>
            <person name="Breitwieser F.P."/>
            <person name="Buerckstuemmer T."/>
            <person name="Bennett K.L."/>
            <person name="Superti-Furga G."/>
            <person name="Colinge J."/>
        </authorList>
    </citation>
    <scope>IDENTIFICATION BY MASS SPECTROMETRY [LARGE SCALE ANALYSIS]</scope>
</reference>
<reference key="6">
    <citation type="journal article" date="2012" name="Proc. Natl. Acad. Sci. U.S.A.">
        <title>N-terminal acetylome analyses and functional insights of the N-terminal acetyltransferase NatB.</title>
        <authorList>
            <person name="Van Damme P."/>
            <person name="Lasa M."/>
            <person name="Polevoda B."/>
            <person name="Gazquez C."/>
            <person name="Elosegui-Artola A."/>
            <person name="Kim D.S."/>
            <person name="De Juan-Pardo E."/>
            <person name="Demeyer K."/>
            <person name="Hole K."/>
            <person name="Larrea E."/>
            <person name="Timmerman E."/>
            <person name="Prieto J."/>
            <person name="Arnesen T."/>
            <person name="Sherman F."/>
            <person name="Gevaert K."/>
            <person name="Aldabe R."/>
        </authorList>
    </citation>
    <scope>IDENTIFICATION BY MASS SPECTROMETRY [LARGE SCALE ANALYSIS]</scope>
</reference>
<reference key="7">
    <citation type="journal article" date="2017" name="Hum. Genet.">
        <title>The landscape of genetic diseases in Saudi Arabia based on the first 1000 diagnostic panels and exomes.</title>
        <authorList>
            <person name="Monies D."/>
            <person name="Abouelhoda M."/>
            <person name="AlSayed M."/>
            <person name="Alhassnan Z."/>
            <person name="Alotaibi M."/>
            <person name="Kayyali H."/>
            <person name="Al-Owain M."/>
            <person name="Shah A."/>
            <person name="Rahbeeni Z."/>
            <person name="Al-Muhaizea M.A."/>
            <person name="Alzaidan H.I."/>
            <person name="Cupler E."/>
            <person name="Bohlega S."/>
            <person name="Faqeih E."/>
            <person name="Faden M."/>
            <person name="Alyounes B."/>
            <person name="Jaroudi D."/>
            <person name="Goljan E."/>
            <person name="Elbardisy H."/>
            <person name="Akilan A."/>
            <person name="Albar R."/>
            <person name="Aldhalaan H."/>
            <person name="Gulab S."/>
            <person name="Chedrawi A."/>
            <person name="Al Saud B.K."/>
            <person name="Kurdi W."/>
            <person name="Makhseed N."/>
            <person name="Alqasim T."/>
            <person name="El Khashab H.Y."/>
            <person name="Al-Mousa H."/>
            <person name="Alhashem A."/>
            <person name="Kanaan I."/>
            <person name="Algoufi T."/>
            <person name="Alsaleem K."/>
            <person name="Basha T.A."/>
            <person name="Al-Murshedi F."/>
            <person name="Khan S."/>
            <person name="Al-Kindy A."/>
            <person name="Alnemer M."/>
            <person name="Al-Hajjar S."/>
            <person name="Alyamani S."/>
            <person name="Aldhekri H."/>
            <person name="Al-Mehaidib A."/>
            <person name="Arnaout R."/>
            <person name="Dabbagh O."/>
            <person name="Shagrani M."/>
            <person name="Broering D."/>
            <person name="Tulbah M."/>
            <person name="Alqassmi A."/>
            <person name="Almugbel M."/>
            <person name="AlQuaiz M."/>
            <person name="Alsaman A."/>
            <person name="Al-Thihli K."/>
            <person name="Sulaiman R.A."/>
            <person name="Al-Dekhail W."/>
            <person name="Alsaegh A."/>
            <person name="Bashiri F.A."/>
            <person name="Qari A."/>
            <person name="Alhomadi S."/>
            <person name="Alkuraya H."/>
            <person name="Alsebayel M."/>
            <person name="Hamad M.H."/>
            <person name="Szonyi L."/>
            <person name="Abaalkhail F."/>
            <person name="Al-Mayouf S.M."/>
            <person name="Almojalli H."/>
            <person name="Alqadi K.S."/>
            <person name="Elsiesy H."/>
            <person name="Shuaib T.M."/>
            <person name="Seidahmed M.Z."/>
            <person name="Abosoudah I."/>
            <person name="Akleh H."/>
            <person name="AlGhonaium A."/>
            <person name="Alkharfy T.M."/>
            <person name="Al Mutairi F."/>
            <person name="Eyaid W."/>
            <person name="Alshanbary A."/>
            <person name="Sheikh F.R."/>
            <person name="Alsohaibani F.I."/>
            <person name="Alsonbul A."/>
            <person name="Al Tala S."/>
            <person name="Balkhy S."/>
            <person name="Bassiouni R."/>
            <person name="Alenizi A.S."/>
            <person name="Hussein M.H."/>
            <person name="Hassan S."/>
            <person name="Khalil M."/>
            <person name="Tabarki B."/>
            <person name="Alshahwan S."/>
            <person name="Oshi A."/>
            <person name="Sabr Y."/>
            <person name="Alsaadoun S."/>
            <person name="Salih M.A."/>
            <person name="Mohamed S."/>
            <person name="Sultana H."/>
            <person name="Tamim A."/>
            <person name="El-Haj M."/>
            <person name="Alshahrani S."/>
            <person name="Bubshait D.K."/>
            <person name="Alfadhel M."/>
            <person name="Faquih T."/>
            <person name="El-Kalioby M."/>
            <person name="Subhani S."/>
            <person name="Shah Z."/>
            <person name="Moghrabi N."/>
            <person name="Meyer B.F."/>
            <person name="Alkuraya F.S."/>
        </authorList>
    </citation>
    <scope>INVOLVEMENT IN CGD5</scope>
</reference>
<reference key="8">
    <citation type="journal article" date="2014" name="J. Proteomics">
        <title>An enzyme assisted RP-RPLC approach for in-depth analysis of human liver phosphoproteome.</title>
        <authorList>
            <person name="Bian Y."/>
            <person name="Song C."/>
            <person name="Cheng K."/>
            <person name="Dong M."/>
            <person name="Wang F."/>
            <person name="Huang J."/>
            <person name="Sun D."/>
            <person name="Wang L."/>
            <person name="Ye M."/>
            <person name="Zou H."/>
        </authorList>
    </citation>
    <scope>IDENTIFICATION BY MASS SPECTROMETRY [LARGE SCALE ANALYSIS]</scope>
    <source>
        <tissue>Liver</tissue>
    </source>
</reference>
<reference key="9">
    <citation type="journal article" date="2017" name="J. Exp. Med.">
        <title>Eros is a novel transmembrane protein that controls the phagocyte respiratory burst and is essential for innate immunity.</title>
        <authorList>
            <person name="Thomas D.C."/>
            <person name="Clare S."/>
            <person name="Sowerby J.M."/>
            <person name="Pardo M."/>
            <person name="Juss J.K."/>
            <person name="Goulding D.A."/>
            <person name="van der Weyden L."/>
            <person name="Storisteanu D."/>
            <person name="Prakash A."/>
            <person name="Espeli M."/>
            <person name="Flint S."/>
            <person name="Lee J.C."/>
            <person name="Hoenderdos K."/>
            <person name="Kane L."/>
            <person name="Harcourt K."/>
            <person name="Mukhopadhyay S."/>
            <person name="Umrania Y."/>
            <person name="Antrobus R."/>
            <person name="Nathan J.A."/>
            <person name="Adams D.J."/>
            <person name="Bateman A."/>
            <person name="Choudhary J.S."/>
            <person name="Lyons P.A."/>
            <person name="Condliffe A.M."/>
            <person name="Chilvers E.R."/>
            <person name="Dougan G."/>
            <person name="Smith K.G."/>
        </authorList>
    </citation>
    <scope>SUBCELLULAR LOCATION</scope>
    <scope>TISSUE SPECIFICITY</scope>
    <scope>INDUCTION BY IFNG</scope>
</reference>
<reference key="10">
    <citation type="journal article" date="2018" name="Nat. Commun.">
        <title>A homozygous loss-of-function mutation leading to CYBC1 deficiency causes chronic granulomatous disease.</title>
        <authorList>
            <person name="Arnadottir G.A."/>
            <person name="Norddahl G.L."/>
            <person name="Gudmundsdottir S."/>
            <person name="Agustsdottir A.B."/>
            <person name="Sigurdsson S."/>
            <person name="Jensson B.O."/>
            <person name="Bjarnadottir K."/>
            <person name="Theodors F."/>
            <person name="Benonisdottir S."/>
            <person name="Ivarsdottir E.V."/>
            <person name="Oddsson A."/>
            <person name="Kristjansson R.P."/>
            <person name="Sulem G."/>
            <person name="Alexandersson K.F."/>
            <person name="Juliusdottir T."/>
            <person name="Gudmundsson K.R."/>
            <person name="Saemundsdottir J."/>
            <person name="Jonasdottir A."/>
            <person name="Jonasdottir A."/>
            <person name="Sigurdsson A."/>
            <person name="Manzanillo P."/>
            <person name="Gudjonsson S.A."/>
            <person name="Thorisson G.A."/>
            <person name="Magnusson O.T."/>
            <person name="Masson G."/>
            <person name="Orvar K.B."/>
            <person name="Holm H."/>
            <person name="Bjornsson S."/>
            <person name="Arngrimsson R."/>
            <person name="Gudbjartsson D.F."/>
            <person name="Thorsteinsdottir U."/>
            <person name="Jonsdottir I."/>
            <person name="Haraldsson A."/>
            <person name="Sulem P."/>
            <person name="Stefansson K."/>
        </authorList>
    </citation>
    <scope>VARIANT CGD5 2-TYR--SER-187 DEL</scope>
    <scope>CHARACTERIZATION OF VARIANT CGD5 2-TYR--SER-187 DEL</scope>
    <scope>FUNCTION</scope>
</reference>
<evidence type="ECO:0000250" key="1">
    <source>
        <dbReference type="UniProtKB" id="Q3TYS2"/>
    </source>
</evidence>
<evidence type="ECO:0000250" key="2">
    <source>
        <dbReference type="UniProtKB" id="Q6AYA6"/>
    </source>
</evidence>
<evidence type="ECO:0000255" key="3"/>
<evidence type="ECO:0000269" key="4">
    <source>
    </source>
</evidence>
<evidence type="ECO:0000269" key="5">
    <source>
    </source>
</evidence>
<evidence type="ECO:0000269" key="6">
    <source>
    </source>
</evidence>
<evidence type="ECO:0000303" key="7">
    <source>
    </source>
</evidence>
<evidence type="ECO:0000305" key="8"/>
<evidence type="ECO:0000312" key="9">
    <source>
        <dbReference type="HGNC" id="HGNC:28672"/>
    </source>
</evidence>
<feature type="chain" id="PRO_0000281418" description="Cytochrome b-245 chaperone 1">
    <location>
        <begin position="1"/>
        <end position="187"/>
    </location>
</feature>
<feature type="transmembrane region" description="Helical" evidence="3">
    <location>
        <begin position="20"/>
        <end position="42"/>
    </location>
</feature>
<feature type="modified residue" description="Phosphoserine" evidence="2">
    <location>
        <position position="168"/>
    </location>
</feature>
<feature type="splice variant" id="VSP_046335" description="In isoform 2." evidence="7">
    <location>
        <begin position="29"/>
        <end position="42"/>
    </location>
</feature>
<feature type="sequence variant" id="VAR_084696" description="In CGD5; loss of protein expression; decreased PMA-induced oxidative burst in neutrophils." evidence="6">
    <location>
        <begin position="2"/>
        <end position="187"/>
    </location>
</feature>
<accession>Q9BQA9</accession>
<accession>E1B6X3</accession>
<accession>Q96NR1</accession>
<comment type="function">
    <text evidence="1 6">Functions as a chaperone necessary for a stable expression of the CYBA and CYBB subunits of the cytochrome b-245 heterodimer (PubMed:30361506). Controls the phagocyte respiratory burst and is essential for innate immunity (By similarity).</text>
</comment>
<comment type="subunit">
    <text evidence="4">Interacts with CYBB; CYBC1 may act as a chaperone stabilizing Cytochrome b-245 heterodimer.</text>
</comment>
<comment type="interaction">
    <interactant intactId="EBI-2680384">
        <id>Q9BQA9</id>
    </interactant>
    <interactant intactId="EBI-10827839">
        <id>Q15848</id>
        <label>ADIPOQ</label>
    </interactant>
    <organismsDiffer>false</organismsDiffer>
    <experiments>3</experiments>
</comment>
<comment type="interaction">
    <interactant intactId="EBI-2680384">
        <id>Q9BQA9</id>
    </interactant>
    <interactant intactId="EBI-11522760">
        <id>Q6RW13-2</id>
        <label>AGTRAP</label>
    </interactant>
    <organismsDiffer>false</organismsDiffer>
    <experiments>3</experiments>
</comment>
<comment type="interaction">
    <interactant intactId="EBI-2680384">
        <id>Q9BQA9</id>
    </interactant>
    <interactant intactId="EBI-12078468">
        <id>Q8IVF2-3</id>
        <label>AHNAK2</label>
    </interactant>
    <organismsDiffer>false</organismsDiffer>
    <experiments>3</experiments>
</comment>
<comment type="interaction">
    <interactant intactId="EBI-2680384">
        <id>Q9BQA9</id>
    </interactant>
    <interactant intactId="EBI-11957045">
        <id>Q9NVV5-2</id>
        <label>AIG1</label>
    </interactant>
    <organismsDiffer>false</organismsDiffer>
    <experiments>3</experiments>
</comment>
<comment type="interaction">
    <interactant intactId="EBI-2680384">
        <id>Q9BQA9</id>
    </interactant>
    <interactant intactId="EBI-12904424">
        <id>Q8NCL9</id>
        <label>APCDD1L</label>
    </interactant>
    <organismsDiffer>false</organismsDiffer>
    <experiments>3</experiments>
</comment>
<comment type="interaction">
    <interactant intactId="EBI-2680384">
        <id>Q9BQA9</id>
    </interactant>
    <interactant intactId="EBI-1171525">
        <id>P02652</id>
        <label>APOA2</label>
    </interactant>
    <organismsDiffer>false</organismsDiffer>
    <experiments>3</experiments>
</comment>
<comment type="interaction">
    <interactant intactId="EBI-2680384">
        <id>Q9BQA9</id>
    </interactant>
    <interactant intactId="EBI-4290634">
        <id>Q9BQE5</id>
        <label>APOL2</label>
    </interactant>
    <organismsDiffer>false</organismsDiffer>
    <experiments>3</experiments>
</comment>
<comment type="interaction">
    <interactant intactId="EBI-2680384">
        <id>Q9BQA9</id>
    </interactant>
    <interactant intactId="EBI-12820279">
        <id>Q96PS8</id>
        <label>AQP10</label>
    </interactant>
    <organismsDiffer>false</organismsDiffer>
    <experiments>3</experiments>
</comment>
<comment type="interaction">
    <interactant intactId="EBI-2680384">
        <id>Q9BQA9</id>
    </interactant>
    <interactant intactId="EBI-13059134">
        <id>Q13520</id>
        <label>AQP6</label>
    </interactant>
    <organismsDiffer>false</organismsDiffer>
    <experiments>3</experiments>
</comment>
<comment type="interaction">
    <interactant intactId="EBI-2680384">
        <id>Q9BQA9</id>
    </interactant>
    <interactant intactId="EBI-19124986">
        <id>O94778</id>
        <label>AQP8</label>
    </interactant>
    <organismsDiffer>false</organismsDiffer>
    <experiments>3</experiments>
</comment>
<comment type="interaction">
    <interactant intactId="EBI-2680384">
        <id>Q9BQA9</id>
    </interactant>
    <interactant intactId="EBI-749204">
        <id>O15155</id>
        <label>BET1</label>
    </interactant>
    <organismsDiffer>false</organismsDiffer>
    <experiments>3</experiments>
</comment>
<comment type="interaction">
    <interactant intactId="EBI-2680384">
        <id>Q9BQA9</id>
    </interactant>
    <interactant intactId="EBI-12003442">
        <id>Q8WVX3-2</id>
        <label>C4orf3</label>
    </interactant>
    <organismsDiffer>false</organismsDiffer>
    <experiments>3</experiments>
</comment>
<comment type="interaction">
    <interactant intactId="EBI-2680384">
        <id>Q9BQA9</id>
    </interactant>
    <interactant intactId="EBI-6657396">
        <id>P19397</id>
        <label>CD53</label>
    </interactant>
    <organismsDiffer>false</organismsDiffer>
    <experiments>3</experiments>
</comment>
<comment type="interaction">
    <interactant intactId="EBI-2680384">
        <id>Q9BQA9</id>
    </interactant>
    <interactant intactId="EBI-1045797">
        <id>Q8N5K1</id>
        <label>CISD2</label>
    </interactant>
    <organismsDiffer>false</organismsDiffer>
    <experiments>3</experiments>
</comment>
<comment type="interaction">
    <interactant intactId="EBI-2680384">
        <id>Q9BQA9</id>
    </interactant>
    <interactant intactId="EBI-740744">
        <id>O95471</id>
        <label>CLDN7</label>
    </interactant>
    <organismsDiffer>false</organismsDiffer>
    <experiments>3</experiments>
</comment>
<comment type="interaction">
    <interactant intactId="EBI-2680384">
        <id>Q9BQA9</id>
    </interactant>
    <interactant intactId="EBI-6165897">
        <id>Q9NWW5</id>
        <label>CLN6</label>
    </interactant>
    <organismsDiffer>false</organismsDiffer>
    <experiments>3</experiments>
</comment>
<comment type="interaction">
    <interactant intactId="EBI-2680384">
        <id>Q9BQA9</id>
    </interactant>
    <interactant intactId="EBI-724524">
        <id>O75208</id>
        <label>COQ9</label>
    </interactant>
    <organismsDiffer>false</organismsDiffer>
    <experiments>3</experiments>
</comment>
<comment type="interaction">
    <interactant intactId="EBI-2680384">
        <id>Q9BQA9</id>
    </interactant>
    <interactant intactId="EBI-18013275">
        <id>Q7Z7G2</id>
        <label>CPLX4</label>
    </interactant>
    <organismsDiffer>false</organismsDiffer>
    <experiments>3</experiments>
</comment>
<comment type="interaction">
    <interactant intactId="EBI-2680384">
        <id>Q9BQA9</id>
    </interactant>
    <interactant intactId="EBI-6253630">
        <id>P04839</id>
        <label>CYBB</label>
    </interactant>
    <organismsDiffer>false</organismsDiffer>
    <experiments>3</experiments>
</comment>
<comment type="interaction">
    <interactant intactId="EBI-2680384">
        <id>Q9BQA9</id>
    </interactant>
    <interactant intactId="EBI-781551">
        <id>Q9Y282</id>
        <label>ERGIC3</label>
    </interactant>
    <organismsDiffer>false</organismsDiffer>
    <experiments>3</experiments>
</comment>
<comment type="interaction">
    <interactant intactId="EBI-2680384">
        <id>Q9BQA9</id>
    </interactant>
    <interactant intactId="EBI-913209">
        <id>P14921</id>
        <label>ETS1</label>
    </interactant>
    <organismsDiffer>false</organismsDiffer>
    <experiments>3</experiments>
</comment>
<comment type="interaction">
    <interactant intactId="EBI-2680384">
        <id>Q9BQA9</id>
    </interactant>
    <interactant intactId="EBI-18304435">
        <id>Q5JX71</id>
        <label>FAM209A</label>
    </interactant>
    <organismsDiffer>false</organismsDiffer>
    <experiments>3</experiments>
</comment>
<comment type="interaction">
    <interactant intactId="EBI-2680384">
        <id>Q9BQA9</id>
    </interactant>
    <interactant intactId="EBI-17458373">
        <id>P48165</id>
        <label>GJA8</label>
    </interactant>
    <organismsDiffer>false</organismsDiffer>
    <experiments>3</experiments>
</comment>
<comment type="interaction">
    <interactant intactId="EBI-2680384">
        <id>Q9BQA9</id>
    </interactant>
    <interactant intactId="EBI-11955647">
        <id>Q8TDV0</id>
        <label>GPR151</label>
    </interactant>
    <organismsDiffer>false</organismsDiffer>
    <experiments>3</experiments>
</comment>
<comment type="interaction">
    <interactant intactId="EBI-2680384">
        <id>Q9BQA9</id>
    </interactant>
    <interactant intactId="EBI-13345167">
        <id>Q8TDT2</id>
        <label>GPR152</label>
    </interactant>
    <organismsDiffer>false</organismsDiffer>
    <experiments>3</experiments>
</comment>
<comment type="interaction">
    <interactant intactId="EBI-2680384">
        <id>Q9BQA9</id>
    </interactant>
    <interactant intactId="EBI-1052304">
        <id>Q8NBQ5</id>
        <label>HSD17B11</label>
    </interactant>
    <organismsDiffer>false</organismsDiffer>
    <experiments>3</experiments>
</comment>
<comment type="interaction">
    <interactant intactId="EBI-2680384">
        <id>Q9BQA9</id>
    </interactant>
    <interactant intactId="EBI-18053395">
        <id>Q7Z5P4</id>
        <label>HSD17B13</label>
    </interactant>
    <organismsDiffer>false</organismsDiffer>
    <experiments>3</experiments>
</comment>
<comment type="interaction">
    <interactant intactId="EBI-2680384">
        <id>Q9BQA9</id>
    </interactant>
    <interactant intactId="EBI-8503746">
        <id>Q9Y5U4</id>
        <label>INSIG2</label>
    </interactant>
    <organismsDiffer>false</organismsDiffer>
    <experiments>3</experiments>
</comment>
<comment type="interaction">
    <interactant intactId="EBI-2680384">
        <id>Q9BQA9</id>
    </interactant>
    <interactant intactId="EBI-10266796">
        <id>Q8N5M9</id>
        <label>JAGN1</label>
    </interactant>
    <organismsDiffer>false</organismsDiffer>
    <experiments>3</experiments>
</comment>
<comment type="interaction">
    <interactant intactId="EBI-2680384">
        <id>Q9BQA9</id>
    </interactant>
    <interactant intactId="EBI-749265">
        <id>Q8N6L0</id>
        <label>KASH5</label>
    </interactant>
    <organismsDiffer>false</organismsDiffer>
    <experiments>6</experiments>
</comment>
<comment type="interaction">
    <interactant intactId="EBI-2680384">
        <id>Q9BQA9</id>
    </interactant>
    <interactant intactId="EBI-8632435">
        <id>P43628</id>
        <label>KIR2DL3</label>
    </interactant>
    <organismsDiffer>false</organismsDiffer>
    <experiments>3</experiments>
</comment>
<comment type="interaction">
    <interactant intactId="EBI-2680384">
        <id>Q9BQA9</id>
    </interactant>
    <interactant intactId="EBI-8070286">
        <id>O43561-2</id>
        <label>LAT</label>
    </interactant>
    <organismsDiffer>false</organismsDiffer>
    <experiments>3</experiments>
</comment>
<comment type="interaction">
    <interactant intactId="EBI-2680384">
        <id>Q9BQA9</id>
    </interactant>
    <interactant intactId="EBI-1044504">
        <id>Q9BS40</id>
        <label>LXN</label>
    </interactant>
    <organismsDiffer>false</organismsDiffer>
    <experiments>3</experiments>
</comment>
<comment type="interaction">
    <interactant intactId="EBI-2680384">
        <id>Q9BQA9</id>
    </interactant>
    <interactant intactId="EBI-11956541">
        <id>Q9GZY8-5</id>
        <label>MFF</label>
    </interactant>
    <organismsDiffer>false</organismsDiffer>
    <experiments>3</experiments>
</comment>
<comment type="interaction">
    <interactant intactId="EBI-2680384">
        <id>Q9BQA9</id>
    </interactant>
    <interactant intactId="EBI-373355">
        <id>Q5SR56</id>
        <label>MFSD14B</label>
    </interactant>
    <organismsDiffer>false</organismsDiffer>
    <experiments>3</experiments>
</comment>
<comment type="interaction">
    <interactant intactId="EBI-2680384">
        <id>Q9BQA9</id>
    </interactant>
    <interactant intactId="EBI-724754">
        <id>O14880</id>
        <label>MGST3</label>
    </interactant>
    <organismsDiffer>false</organismsDiffer>
    <experiments>3</experiments>
</comment>
<comment type="interaction">
    <interactant intactId="EBI-2680384">
        <id>Q9BQA9</id>
    </interactant>
    <interactant intactId="EBI-3923617">
        <id>Q9H2K0</id>
        <label>MTIF3</label>
    </interactant>
    <organismsDiffer>false</organismsDiffer>
    <experiments>3</experiments>
</comment>
<comment type="interaction">
    <interactant intactId="EBI-2680384">
        <id>Q9BQA9</id>
    </interactant>
    <interactant intactId="EBI-10317425">
        <id>Q9NZG7</id>
        <label>NINJ2</label>
    </interactant>
    <organismsDiffer>false</organismsDiffer>
    <experiments>3</experiments>
</comment>
<comment type="interaction">
    <interactant intactId="EBI-2680384">
        <id>Q9BQA9</id>
    </interactant>
    <interactant intactId="EBI-13069010">
        <id>Q9HBY0</id>
        <label>NOX3</label>
    </interactant>
    <organismsDiffer>false</organismsDiffer>
    <experiments>3</experiments>
</comment>
<comment type="interaction">
    <interactant intactId="EBI-2680384">
        <id>Q9BQA9</id>
    </interactant>
    <interactant intactId="EBI-12051377">
        <id>Q8N912</id>
        <label>NRAC</label>
    </interactant>
    <organismsDiffer>false</organismsDiffer>
    <experiments>3</experiments>
</comment>
<comment type="interaction">
    <interactant intactId="EBI-2680384">
        <id>Q9BQA9</id>
    </interactant>
    <interactant intactId="EBI-10262547">
        <id>Q8IXM6</id>
        <label>NRM</label>
    </interactant>
    <organismsDiffer>false</organismsDiffer>
    <experiments>3</experiments>
</comment>
<comment type="interaction">
    <interactant intactId="EBI-2680384">
        <id>Q9BQA9</id>
    </interactant>
    <interactant intactId="EBI-11599725">
        <id>P51575</id>
        <label>P2RX1</label>
    </interactant>
    <organismsDiffer>false</organismsDiffer>
    <experiments>5</experiments>
</comment>
<comment type="interaction">
    <interactant intactId="EBI-2680384">
        <id>Q9BQA9</id>
    </interactant>
    <interactant intactId="EBI-716063">
        <id>Q13113</id>
        <label>PDZK1IP1</label>
    </interactant>
    <organismsDiffer>false</organismsDiffer>
    <experiments>3</experiments>
</comment>
<comment type="interaction">
    <interactant intactId="EBI-2680384">
        <id>Q9BQA9</id>
    </interactant>
    <interactant intactId="EBI-594836">
        <id>O00623</id>
        <label>PEX12</label>
    </interactant>
    <organismsDiffer>false</organismsDiffer>
    <experiments>3</experiments>
</comment>
<comment type="interaction">
    <interactant intactId="EBI-2680384">
        <id>Q9BQA9</id>
    </interactant>
    <interactant intactId="EBI-725795">
        <id>O60664</id>
        <label>PLIN3</label>
    </interactant>
    <organismsDiffer>false</organismsDiffer>
    <experiments>3</experiments>
</comment>
<comment type="interaction">
    <interactant intactId="EBI-2680384">
        <id>Q9BQA9</id>
    </interactant>
    <interactant intactId="EBI-12188331">
        <id>P60201-2</id>
        <label>PLP1</label>
    </interactant>
    <organismsDiffer>false</organismsDiffer>
    <experiments>3</experiments>
</comment>
<comment type="interaction">
    <interactant intactId="EBI-2680384">
        <id>Q9BQA9</id>
    </interactant>
    <interactant intactId="EBI-608347">
        <id>Q04941</id>
        <label>PLP2</label>
    </interactant>
    <organismsDiffer>false</organismsDiffer>
    <experiments>3</experiments>
</comment>
<comment type="interaction">
    <interactant intactId="EBI-2680384">
        <id>Q9BQA9</id>
    </interactant>
    <interactant intactId="EBI-2684237">
        <id>O00767</id>
        <label>SCD</label>
    </interactant>
    <organismsDiffer>false</organismsDiffer>
    <experiments>3</experiments>
</comment>
<comment type="interaction">
    <interactant intactId="EBI-2680384">
        <id>Q9BQA9</id>
    </interactant>
    <interactant intactId="EBI-18035902">
        <id>Q96DD7</id>
        <label>SHISA4</label>
    </interactant>
    <organismsDiffer>false</organismsDiffer>
    <experiments>3</experiments>
</comment>
<comment type="interaction">
    <interactant intactId="EBI-2680384">
        <id>Q9BQA9</id>
    </interactant>
    <interactant intactId="EBI-17295964">
        <id>Q9NQQ7-3</id>
        <label>SLC35C2</label>
    </interactant>
    <organismsDiffer>false</organismsDiffer>
    <experiments>3</experiments>
</comment>
<comment type="interaction">
    <interactant intactId="EBI-2680384">
        <id>Q9BQA9</id>
    </interactant>
    <interactant intactId="EBI-10049055">
        <id>P16150</id>
        <label>SPN</label>
    </interactant>
    <organismsDiffer>false</organismsDiffer>
    <experiments>3</experiments>
</comment>
<comment type="interaction">
    <interactant intactId="EBI-2680384">
        <id>Q9BQA9</id>
    </interactant>
    <interactant intactId="EBI-17280858">
        <id>Q8WWF3</id>
        <label>SSMEM1</label>
    </interactant>
    <organismsDiffer>false</organismsDiffer>
    <experiments>3</experiments>
</comment>
<comment type="interaction">
    <interactant intactId="EBI-2680384">
        <id>Q9BQA9</id>
    </interactant>
    <interactant intactId="EBI-11956649">
        <id>P32856-2</id>
        <label>STX2</label>
    </interactant>
    <organismsDiffer>false</organismsDiffer>
    <experiments>3</experiments>
</comment>
<comment type="interaction">
    <interactant intactId="EBI-2680384">
        <id>Q9BQA9</id>
    </interactant>
    <interactant intactId="EBI-941422">
        <id>P07204</id>
        <label>THBD</label>
    </interactant>
    <organismsDiffer>false</organismsDiffer>
    <experiments>3</experiments>
</comment>
<comment type="interaction">
    <interactant intactId="EBI-2680384">
        <id>Q9BQA9</id>
    </interactant>
    <interactant intactId="EBI-6448756">
        <id>Q96DZ7</id>
        <label>TM4SF19</label>
    </interactant>
    <organismsDiffer>false</organismsDiffer>
    <experiments>3</experiments>
</comment>
<comment type="interaction">
    <interactant intactId="EBI-2680384">
        <id>Q9BQA9</id>
    </interactant>
    <interactant intactId="EBI-10694905">
        <id>Q5BJH2-2</id>
        <label>TMEM128</label>
    </interactant>
    <organismsDiffer>false</organismsDiffer>
    <experiments>3</experiments>
</comment>
<comment type="interaction">
    <interactant intactId="EBI-2680384">
        <id>Q9BQA9</id>
    </interactant>
    <interactant intactId="EBI-11742770">
        <id>Q96HE8</id>
        <label>TMEM80</label>
    </interactant>
    <organismsDiffer>false</organismsDiffer>
    <experiments>3</experiments>
</comment>
<comment type="interaction">
    <interactant intactId="EBI-2680384">
        <id>Q9BQA9</id>
    </interactant>
    <interactant intactId="EBI-12345267">
        <id>O15393-2</id>
        <label>TMPRSS2</label>
    </interactant>
    <organismsDiffer>false</organismsDiffer>
    <experiments>3</experiments>
</comment>
<comment type="interaction">
    <interactant intactId="EBI-2680384">
        <id>Q9BQA9</id>
    </interactant>
    <interactant intactId="EBI-6447886">
        <id>Q9Y320</id>
        <label>TMX2</label>
    </interactant>
    <organismsDiffer>false</organismsDiffer>
    <experiments>3</experiments>
</comment>
<comment type="interaction">
    <interactant intactId="EBI-2680384">
        <id>Q9BQA9</id>
    </interactant>
    <interactant intactId="EBI-11996766">
        <id>Q8N609</id>
        <label>TRAM1L1</label>
    </interactant>
    <organismsDiffer>false</organismsDiffer>
    <experiments>3</experiments>
</comment>
<comment type="interaction">
    <interactant intactId="EBI-2680384">
        <id>Q9BQA9</id>
    </interactant>
    <interactant intactId="EBI-2466403">
        <id>O95859</id>
        <label>TSPAN12</label>
    </interactant>
    <organismsDiffer>false</organismsDiffer>
    <experiments>3</experiments>
</comment>
<comment type="subcellular location">
    <subcellularLocation>
        <location evidence="4">Endoplasmic reticulum membrane</location>
        <topology evidence="8">Single-pass membrane protein</topology>
    </subcellularLocation>
</comment>
<comment type="alternative products">
    <event type="alternative splicing"/>
    <isoform>
        <id>Q9BQA9-1</id>
        <name>1</name>
        <sequence type="displayed"/>
    </isoform>
    <isoform>
        <id>Q9BQA9-2</id>
        <name>2</name>
        <sequence type="described" ref="VSP_046335"/>
    </isoform>
</comment>
<comment type="tissue specificity">
    <text evidence="4">Highly expressed in macrophages, neutrophils and monocytes.</text>
</comment>
<comment type="induction">
    <text evidence="4">In macrophages, expression is induced after treatment with IFNG or a combination of IFNG and Salmonella Tiphimurium.</text>
</comment>
<comment type="disease" evidence="5 6">
    <disease id="DI-05870">
        <name>Granulomatous disease, chronic, autosomal recessive, 5</name>
        <acronym>CGD5</acronym>
        <description>A form of chronic granulomatous disease, a primary immunodeficiency characterized by severe recurrent bacterial and fungal infections, along with manifestations of chronic granulomatous inflammation. It results from an impaired ability of phagocytes to mount a burst of reactive oxygen species in response to pathogens. CGD5 is an autosomal recessive form characterized by onset of recurrent infections and severe colitis in the first decade of life. Clinical manifestations include increased susceptibility to catalase-positive organisms, features of inflammatory bowel disease, lymphopenia, lymphadenitis, and autoinflammatory symptoms in some patients.</description>
        <dbReference type="MIM" id="618935"/>
    </disease>
    <text>The disease is caused by variants affecting the gene represented in this entry.</text>
</comment>
<comment type="similarity">
    <text>Belongs to the CYBC1 family.</text>
</comment>
<comment type="sequence caution" evidence="8">
    <conflict type="miscellaneous discrepancy">
        <sequence resource="EMBL-CDS" id="BAB70818"/>
    </conflict>
    <text>Wrong choice of frame.</text>
</comment>
<keyword id="KW-0002">3D-structure</keyword>
<keyword id="KW-0025">Alternative splicing</keyword>
<keyword id="KW-0143">Chaperone</keyword>
<keyword id="KW-0161">Chronic granulomatous disease</keyword>
<keyword id="KW-0225">Disease variant</keyword>
<keyword id="KW-0256">Endoplasmic reticulum</keyword>
<keyword id="KW-0391">Immunity</keyword>
<keyword id="KW-0399">Innate immunity</keyword>
<keyword id="KW-0472">Membrane</keyword>
<keyword id="KW-0597">Phosphoprotein</keyword>
<keyword id="KW-1267">Proteomics identification</keyword>
<keyword id="KW-1185">Reference proteome</keyword>
<keyword id="KW-0812">Transmembrane</keyword>
<keyword id="KW-1133">Transmembrane helix</keyword>
<dbReference type="EMBL" id="AK054876">
    <property type="protein sequence ID" value="BAB70818.1"/>
    <property type="status" value="ALT_SEQ"/>
    <property type="molecule type" value="mRNA"/>
</dbReference>
<dbReference type="EMBL" id="AC132938">
    <property type="status" value="NOT_ANNOTATED_CDS"/>
    <property type="molecule type" value="Genomic_DNA"/>
</dbReference>
<dbReference type="EMBL" id="CH471099">
    <property type="protein sequence ID" value="EAW89786.1"/>
    <property type="molecule type" value="Genomic_DNA"/>
</dbReference>
<dbReference type="EMBL" id="BC004171">
    <property type="protein sequence ID" value="AAH04171.1"/>
    <property type="molecule type" value="mRNA"/>
</dbReference>
<dbReference type="EMBL" id="BC003595">
    <property type="protein sequence ID" value="AAH03595.1"/>
    <property type="molecule type" value="mRNA"/>
</dbReference>
<dbReference type="CCDS" id="CCDS32776.1">
    <molecule id="Q9BQA9-1"/>
</dbReference>
<dbReference type="CCDS" id="CCDS45817.1">
    <molecule id="Q9BQA9-2"/>
</dbReference>
<dbReference type="RefSeq" id="NP_001028218.1">
    <molecule id="Q9BQA9-1"/>
    <property type="nucleotide sequence ID" value="NM_001033046.4"/>
</dbReference>
<dbReference type="RefSeq" id="NP_001093877.1">
    <molecule id="Q9BQA9-1"/>
    <property type="nucleotide sequence ID" value="NM_001100407.3"/>
</dbReference>
<dbReference type="RefSeq" id="NP_001093878.1">
    <molecule id="Q9BQA9-2"/>
    <property type="nucleotide sequence ID" value="NM_001100408.3"/>
</dbReference>
<dbReference type="RefSeq" id="NP_001180582.1">
    <molecule id="Q9BQA9-1"/>
    <property type="nucleotide sequence ID" value="NM_001193653.2"/>
</dbReference>
<dbReference type="RefSeq" id="NP_001180583.1">
    <molecule id="Q9BQA9-1"/>
    <property type="nucleotide sequence ID" value="NM_001193654.2"/>
</dbReference>
<dbReference type="RefSeq" id="NP_001180584.1">
    <molecule id="Q9BQA9-1"/>
    <property type="nucleotide sequence ID" value="NM_001193655.2"/>
</dbReference>
<dbReference type="RefSeq" id="NP_001180586.1">
    <molecule id="Q9BQA9-1"/>
    <property type="nucleotide sequence ID" value="NM_001193657.2"/>
</dbReference>
<dbReference type="RefSeq" id="XP_006722356.1">
    <property type="nucleotide sequence ID" value="XM_006722293.2"/>
</dbReference>
<dbReference type="RefSeq" id="XP_011521908.2">
    <molecule id="Q9BQA9-1"/>
    <property type="nucleotide sequence ID" value="XM_011523606.4"/>
</dbReference>
<dbReference type="RefSeq" id="XP_016880563.1">
    <property type="nucleotide sequence ID" value="XM_017025074.1"/>
</dbReference>
<dbReference type="RefSeq" id="XP_016880564.1">
    <property type="nucleotide sequence ID" value="XM_017025075.1"/>
</dbReference>
<dbReference type="RefSeq" id="XP_016880565.1">
    <property type="nucleotide sequence ID" value="XM_017025076.1"/>
</dbReference>
<dbReference type="RefSeq" id="XP_016880566.1">
    <property type="nucleotide sequence ID" value="XM_017025077.1"/>
</dbReference>
<dbReference type="RefSeq" id="XP_016880567.1">
    <property type="nucleotide sequence ID" value="XM_017025078.1"/>
</dbReference>
<dbReference type="RefSeq" id="XP_047292697.1">
    <molecule id="Q9BQA9-2"/>
    <property type="nucleotide sequence ID" value="XM_047436741.1"/>
</dbReference>
<dbReference type="RefSeq" id="XP_047292698.1">
    <molecule id="Q9BQA9-2"/>
    <property type="nucleotide sequence ID" value="XM_047436742.1"/>
</dbReference>
<dbReference type="RefSeq" id="XP_054173180.1">
    <molecule id="Q9BQA9-1"/>
    <property type="nucleotide sequence ID" value="XM_054317205.1"/>
</dbReference>
<dbReference type="RefSeq" id="XP_054173181.1">
    <molecule id="Q9BQA9-2"/>
    <property type="nucleotide sequence ID" value="XM_054317206.1"/>
</dbReference>
<dbReference type="RefSeq" id="XP_054173182.1">
    <molecule id="Q9BQA9-2"/>
    <property type="nucleotide sequence ID" value="XM_054317207.1"/>
</dbReference>
<dbReference type="PDB" id="8KEI">
    <property type="method" value="EM"/>
    <property type="resolution" value="3.56 A"/>
    <property type="chains" value="D=1-164"/>
</dbReference>
<dbReference type="PDBsum" id="8KEI"/>
<dbReference type="EMDB" id="EMD-37159"/>
<dbReference type="SMR" id="Q9BQA9"/>
<dbReference type="BioGRID" id="122665">
    <property type="interactions" value="88"/>
</dbReference>
<dbReference type="FunCoup" id="Q9BQA9">
    <property type="interactions" value="1048"/>
</dbReference>
<dbReference type="IntAct" id="Q9BQA9">
    <property type="interactions" value="78"/>
</dbReference>
<dbReference type="MINT" id="Q9BQA9"/>
<dbReference type="STRING" id="9606.ENSP00000388909"/>
<dbReference type="iPTMnet" id="Q9BQA9"/>
<dbReference type="PhosphoSitePlus" id="Q9BQA9"/>
<dbReference type="SwissPalm" id="Q9BQA9"/>
<dbReference type="BioMuta" id="C17orf62"/>
<dbReference type="DMDM" id="74732825"/>
<dbReference type="jPOST" id="Q9BQA9"/>
<dbReference type="MassIVE" id="Q9BQA9"/>
<dbReference type="PaxDb" id="9606-ENSP00000388909"/>
<dbReference type="PeptideAtlas" id="Q9BQA9"/>
<dbReference type="ProteomicsDB" id="15206"/>
<dbReference type="ProteomicsDB" id="78649">
    <molecule id="Q9BQA9-1"/>
</dbReference>
<dbReference type="Pumba" id="Q9BQA9"/>
<dbReference type="TopDownProteomics" id="Q9BQA9-1">
    <molecule id="Q9BQA9-1"/>
</dbReference>
<dbReference type="Antibodypedia" id="53358">
    <property type="antibodies" value="136 antibodies from 12 providers"/>
</dbReference>
<dbReference type="DNASU" id="79415"/>
<dbReference type="Ensembl" id="ENST00000306645.10">
    <molecule id="Q9BQA9-1"/>
    <property type="protein sequence ID" value="ENSP00000307765.5"/>
    <property type="gene ID" value="ENSG00000178927.19"/>
</dbReference>
<dbReference type="Ensembl" id="ENST00000434650.6">
    <molecule id="Q9BQA9-2"/>
    <property type="protein sequence ID" value="ENSP00000401626.2"/>
    <property type="gene ID" value="ENSG00000178927.19"/>
</dbReference>
<dbReference type="Ensembl" id="ENST00000437807.6">
    <molecule id="Q9BQA9-1"/>
    <property type="protein sequence ID" value="ENSP00000388909.2"/>
    <property type="gene ID" value="ENSG00000178927.19"/>
</dbReference>
<dbReference type="Ensembl" id="ENST00000577436.5">
    <molecule id="Q9BQA9-2"/>
    <property type="protein sequence ID" value="ENSP00000464633.1"/>
    <property type="gene ID" value="ENSG00000178927.19"/>
</dbReference>
<dbReference type="Ensembl" id="ENST00000577696.6">
    <molecule id="Q9BQA9-1"/>
    <property type="protein sequence ID" value="ENSP00000463215.2"/>
    <property type="gene ID" value="ENSG00000178927.19"/>
</dbReference>
<dbReference type="Ensembl" id="ENST00000577732.5">
    <molecule id="Q9BQA9-1"/>
    <property type="protein sequence ID" value="ENSP00000463228.1"/>
    <property type="gene ID" value="ENSG00000178927.19"/>
</dbReference>
<dbReference type="Ensembl" id="ENST00000578919.6">
    <molecule id="Q9BQA9-1"/>
    <property type="protein sequence ID" value="ENSP00000464080.1"/>
    <property type="gene ID" value="ENSG00000178927.19"/>
</dbReference>
<dbReference type="Ensembl" id="ENST00000585064.5">
    <molecule id="Q9BQA9-1"/>
    <property type="protein sequence ID" value="ENSP00000463846.1"/>
    <property type="gene ID" value="ENSG00000178927.19"/>
</dbReference>
<dbReference type="Ensembl" id="ENST00000585080.5">
    <molecule id="Q9BQA9-1"/>
    <property type="protein sequence ID" value="ENSP00000462529.1"/>
    <property type="gene ID" value="ENSG00000178927.19"/>
</dbReference>
<dbReference type="Ensembl" id="ENST00000585115.2">
    <molecule id="Q9BQA9-2"/>
    <property type="protein sequence ID" value="ENSP00000513957.1"/>
    <property type="gene ID" value="ENSG00000178927.19"/>
</dbReference>
<dbReference type="Ensembl" id="ENST00000698819.1">
    <molecule id="Q9BQA9-1"/>
    <property type="protein sequence ID" value="ENSP00000513955.1"/>
    <property type="gene ID" value="ENSG00000178927.19"/>
</dbReference>
<dbReference type="Ensembl" id="ENST00000698820.1">
    <molecule id="Q9BQA9-2"/>
    <property type="protein sequence ID" value="ENSP00000513956.1"/>
    <property type="gene ID" value="ENSG00000178927.19"/>
</dbReference>
<dbReference type="GeneID" id="79415"/>
<dbReference type="KEGG" id="hsa:79415"/>
<dbReference type="MANE-Select" id="ENST00000306645.10">
    <property type="protein sequence ID" value="ENSP00000307765.5"/>
    <property type="RefSeq nucleotide sequence ID" value="NM_001033046.4"/>
    <property type="RefSeq protein sequence ID" value="NP_001028218.1"/>
</dbReference>
<dbReference type="UCSC" id="uc002kfa.5">
    <molecule id="Q9BQA9-1"/>
    <property type="organism name" value="human"/>
</dbReference>
<dbReference type="AGR" id="HGNC:28672"/>
<dbReference type="CTD" id="79415"/>
<dbReference type="DisGeNET" id="79415"/>
<dbReference type="GeneCards" id="CYBC1"/>
<dbReference type="GeneReviews" id="CYBC1"/>
<dbReference type="HGNC" id="HGNC:28672">
    <property type="gene designation" value="CYBC1"/>
</dbReference>
<dbReference type="HPA" id="ENSG00000178927">
    <property type="expression patterns" value="Low tissue specificity"/>
</dbReference>
<dbReference type="MalaCards" id="CYBC1"/>
<dbReference type="MIM" id="618334">
    <property type="type" value="gene"/>
</dbReference>
<dbReference type="MIM" id="618935">
    <property type="type" value="phenotype"/>
</dbReference>
<dbReference type="neXtProt" id="NX_Q9BQA9"/>
<dbReference type="OpenTargets" id="ENSG00000178927"/>
<dbReference type="Orphanet" id="379">
    <property type="disease" value="Chronic granulomatous disease"/>
</dbReference>
<dbReference type="PharmGKB" id="PA142672245"/>
<dbReference type="VEuPathDB" id="HostDB:ENSG00000178927"/>
<dbReference type="eggNOG" id="ENOG502S06T">
    <property type="taxonomic scope" value="Eukaryota"/>
</dbReference>
<dbReference type="GeneTree" id="ENSGT00390000004691"/>
<dbReference type="HOGENOM" id="CLU_100734_0_0_1"/>
<dbReference type="InParanoid" id="Q9BQA9"/>
<dbReference type="OMA" id="WKLFYIT"/>
<dbReference type="OrthoDB" id="10022724at2759"/>
<dbReference type="PAN-GO" id="Q9BQA9">
    <property type="GO annotations" value="0 GO annotations based on evolutionary models"/>
</dbReference>
<dbReference type="PhylomeDB" id="Q9BQA9"/>
<dbReference type="TreeFam" id="TF332389"/>
<dbReference type="PathwayCommons" id="Q9BQA9"/>
<dbReference type="SignaLink" id="Q9BQA9"/>
<dbReference type="BioGRID-ORCS" id="79415">
    <property type="hits" value="16 hits in 1146 CRISPR screens"/>
</dbReference>
<dbReference type="ChiTaRS" id="C17orf62">
    <property type="organism name" value="human"/>
</dbReference>
<dbReference type="GenomeRNAi" id="79415"/>
<dbReference type="Pharos" id="Q9BQA9">
    <property type="development level" value="Tdark"/>
</dbReference>
<dbReference type="PRO" id="PR:Q9BQA9"/>
<dbReference type="Proteomes" id="UP000005640">
    <property type="component" value="Chromosome 17"/>
</dbReference>
<dbReference type="RNAct" id="Q9BQA9">
    <property type="molecule type" value="protein"/>
</dbReference>
<dbReference type="Bgee" id="ENSG00000178927">
    <property type="expression patterns" value="Expressed in granulocyte and 176 other cell types or tissues"/>
</dbReference>
<dbReference type="ExpressionAtlas" id="Q9BQA9">
    <property type="expression patterns" value="baseline and differential"/>
</dbReference>
<dbReference type="GO" id="GO:0005783">
    <property type="term" value="C:endoplasmic reticulum"/>
    <property type="evidence" value="ECO:0000314"/>
    <property type="project" value="UniProtKB"/>
</dbReference>
<dbReference type="GO" id="GO:0005789">
    <property type="term" value="C:endoplasmic reticulum membrane"/>
    <property type="evidence" value="ECO:0007669"/>
    <property type="project" value="UniProtKB-SubCell"/>
</dbReference>
<dbReference type="GO" id="GO:0045087">
    <property type="term" value="P:innate immune response"/>
    <property type="evidence" value="ECO:0000315"/>
    <property type="project" value="UniProtKB"/>
</dbReference>
<dbReference type="GO" id="GO:0045728">
    <property type="term" value="P:respiratory burst after phagocytosis"/>
    <property type="evidence" value="ECO:0000315"/>
    <property type="project" value="UniProtKB"/>
</dbReference>
<dbReference type="InterPro" id="IPR027846">
    <property type="entry name" value="Cybc1"/>
</dbReference>
<dbReference type="PANTHER" id="PTHR31837">
    <property type="entry name" value="CYTOCHROME B-245 CHAPERONE 1"/>
    <property type="match status" value="1"/>
</dbReference>
<dbReference type="PANTHER" id="PTHR31837:SF3">
    <property type="entry name" value="CYTOCHROME B-245 CHAPERONE 1"/>
    <property type="match status" value="1"/>
</dbReference>
<dbReference type="Pfam" id="PF15169">
    <property type="entry name" value="Cybc1_Eros"/>
    <property type="match status" value="1"/>
</dbReference>
<gene>
    <name evidence="9" type="primary">CYBC1</name>
    <name evidence="9" type="synonym">C17orf62</name>
    <name evidence="1" type="synonym">EROS</name>
</gene>
<name>CYBC1_HUMAN</name>
<proteinExistence type="evidence at protein level"/>